<sequence>MAGLYSLGVSVFSDQGGRKYMEDVTQIVVEPEPTAEEKPSPRRSLSQPLPPRPSPAALPGGEVSGKGPAVAAREARDPLPDAGASPAPSRCCRRRSSVAFFAVCDGHGGREAAQFAREHLWGFIKKQKGFTSSEPAKVCAAIRKGFLACHLAMWKKLAEWPKTMTGLPSTSGTTASVVIIRGMKMYVAHVGDSGVVLGIQDDPKDDFVRAVEVTQDHKPELPKERERIEGLGGSVMNKSGVNRVVWKRPRLTHNGPVRRSTVIDQIPFLAVARALGDLWSYDFFSGEFVVSPEPDTSVHTLDPQKHKYIILGSDGLWNMIPPQDAISMCQDQEEKKYLMGEHGQSCAKMLVNRALGRWRQRMLRADNTSAIVICISPEVDNQGNFTNEDELYLNLTDSPSYNSQETCVMTPSPCSTPPVKSLEEDPWPRVNSKDHIPALVRSNAFSENFLEVSAEIARENVQGVVIPSKDPEPLEENCAKALTLRIHDSLNNSLPIGLVPTNSTNTVMDQKNLKMSTPGQMKAQEIERTPPTNFKRTLEESNSGPLMKKHRRNGLSRSSGAQPASLPTTSQRKNSVKLTMRRRLRGQKKIGNPLLHQHRKTVCVC</sequence>
<keyword id="KW-0002">3D-structure</keyword>
<keyword id="KW-0025">Alternative splicing</keyword>
<keyword id="KW-1268">Autism spectrum disorder</keyword>
<keyword id="KW-0131">Cell cycle</keyword>
<keyword id="KW-0963">Cytoplasm</keyword>
<keyword id="KW-0225">Disease variant</keyword>
<keyword id="KW-0378">Hydrolase</keyword>
<keyword id="KW-0991">Intellectual disability</keyword>
<keyword id="KW-0460">Magnesium</keyword>
<keyword id="KW-0464">Manganese</keyword>
<keyword id="KW-0479">Metal-binding</keyword>
<keyword id="KW-0539">Nucleus</keyword>
<keyword id="KW-0597">Phosphoprotein</keyword>
<keyword id="KW-0904">Protein phosphatase</keyword>
<keyword id="KW-1267">Proteomics identification</keyword>
<keyword id="KW-1185">Reference proteome</keyword>
<protein>
    <recommendedName>
        <fullName>Protein phosphatase 1D</fullName>
        <ecNumber>3.1.3.16</ecNumber>
    </recommendedName>
    <alternativeName>
        <fullName>Protein phosphatase 2C isoform delta</fullName>
        <shortName>PP2C-delta</shortName>
    </alternativeName>
    <alternativeName>
        <fullName>Protein phosphatase magnesium-dependent 1 delta</fullName>
    </alternativeName>
    <alternativeName>
        <fullName>p53-induced protein phosphatase 1</fullName>
    </alternativeName>
</protein>
<evidence type="ECO:0000250" key="1"/>
<evidence type="ECO:0000250" key="2">
    <source>
        <dbReference type="UniProtKB" id="Q9QZ67"/>
    </source>
</evidence>
<evidence type="ECO:0000255" key="3">
    <source>
        <dbReference type="PROSITE-ProRule" id="PRU01082"/>
    </source>
</evidence>
<evidence type="ECO:0000256" key="4">
    <source>
        <dbReference type="SAM" id="MobiDB-lite"/>
    </source>
</evidence>
<evidence type="ECO:0000269" key="5">
    <source>
    </source>
</evidence>
<evidence type="ECO:0000269" key="6">
    <source>
    </source>
</evidence>
<evidence type="ECO:0000269" key="7">
    <source>
    </source>
</evidence>
<evidence type="ECO:0000269" key="8">
    <source>
    </source>
</evidence>
<evidence type="ECO:0000269" key="9">
    <source>
    </source>
</evidence>
<evidence type="ECO:0000269" key="10">
    <source>
    </source>
</evidence>
<evidence type="ECO:0000269" key="11">
    <source>
    </source>
</evidence>
<evidence type="ECO:0000303" key="12">
    <source>
    </source>
</evidence>
<evidence type="ECO:0007744" key="13">
    <source>
    </source>
</evidence>
<evidence type="ECO:0007744" key="14">
    <source>
    </source>
</evidence>
<evidence type="ECO:0007829" key="15">
    <source>
        <dbReference type="PDB" id="8T2J"/>
    </source>
</evidence>
<accession>O15297</accession>
<accession>Q53XP4</accession>
<accession>Q6P991</accession>
<accession>Q8IVR6</accession>
<dbReference type="EC" id="3.1.3.16"/>
<dbReference type="EMBL" id="U78305">
    <property type="protein sequence ID" value="AAB61637.1"/>
    <property type="molecule type" value="mRNA"/>
</dbReference>
<dbReference type="EMBL" id="BT009780">
    <property type="protein sequence ID" value="AAP88782.1"/>
    <property type="molecule type" value="mRNA"/>
</dbReference>
<dbReference type="EMBL" id="AC011921">
    <property type="status" value="NOT_ANNOTATED_CDS"/>
    <property type="molecule type" value="Genomic_DNA"/>
</dbReference>
<dbReference type="EMBL" id="AC110602">
    <property type="status" value="NOT_ANNOTATED_CDS"/>
    <property type="molecule type" value="Genomic_DNA"/>
</dbReference>
<dbReference type="EMBL" id="AC111155">
    <property type="status" value="NOT_ANNOTATED_CDS"/>
    <property type="molecule type" value="Genomic_DNA"/>
</dbReference>
<dbReference type="EMBL" id="CH471179">
    <property type="protein sequence ID" value="EAW51408.1"/>
    <property type="molecule type" value="Genomic_DNA"/>
</dbReference>
<dbReference type="EMBL" id="CH471179">
    <property type="protein sequence ID" value="EAW51409.1"/>
    <property type="molecule type" value="Genomic_DNA"/>
</dbReference>
<dbReference type="EMBL" id="BC016480">
    <property type="protein sequence ID" value="AAH16480.1"/>
    <property type="molecule type" value="mRNA"/>
</dbReference>
<dbReference type="EMBL" id="BC042418">
    <property type="protein sequence ID" value="AAH42418.1"/>
    <property type="molecule type" value="mRNA"/>
</dbReference>
<dbReference type="EMBL" id="BC060877">
    <property type="protein sequence ID" value="AAH60877.1"/>
    <property type="molecule type" value="mRNA"/>
</dbReference>
<dbReference type="CCDS" id="CCDS11625.1">
    <molecule id="O15297-1"/>
</dbReference>
<dbReference type="RefSeq" id="NP_003611.1">
    <molecule id="O15297-1"/>
    <property type="nucleotide sequence ID" value="NM_003620.4"/>
</dbReference>
<dbReference type="PDB" id="8T2J">
    <property type="method" value="X-ray"/>
    <property type="resolution" value="1.80 A"/>
    <property type="chains" value="A=1-403"/>
</dbReference>
<dbReference type="PDBsum" id="8T2J"/>
<dbReference type="SMR" id="O15297"/>
<dbReference type="BioGRID" id="114065">
    <property type="interactions" value="59"/>
</dbReference>
<dbReference type="CORUM" id="O15297"/>
<dbReference type="DIP" id="DIP-38281N"/>
<dbReference type="FunCoup" id="O15297">
    <property type="interactions" value="4285"/>
</dbReference>
<dbReference type="IntAct" id="O15297">
    <property type="interactions" value="46"/>
</dbReference>
<dbReference type="MINT" id="O15297"/>
<dbReference type="STRING" id="9606.ENSP00000306682"/>
<dbReference type="BindingDB" id="O15297"/>
<dbReference type="ChEMBL" id="CHEMBL1938224"/>
<dbReference type="GuidetoPHARMACOLOGY" id="3134"/>
<dbReference type="DEPOD" id="PPM1D"/>
<dbReference type="GlyGen" id="O15297">
    <property type="glycosylation" value="2 sites, 1 N-linked glycan (1 site), 1 O-linked glycan (1 site)"/>
</dbReference>
<dbReference type="iPTMnet" id="O15297"/>
<dbReference type="MetOSite" id="O15297"/>
<dbReference type="PhosphoSitePlus" id="O15297"/>
<dbReference type="BioMuta" id="PPM1D"/>
<dbReference type="jPOST" id="O15297"/>
<dbReference type="MassIVE" id="O15297"/>
<dbReference type="PaxDb" id="9606-ENSP00000306682"/>
<dbReference type="PeptideAtlas" id="O15297"/>
<dbReference type="ProteomicsDB" id="48570">
    <molecule id="O15297-1"/>
</dbReference>
<dbReference type="ProteomicsDB" id="70754"/>
<dbReference type="Pumba" id="O15297"/>
<dbReference type="Antibodypedia" id="4007">
    <property type="antibodies" value="293 antibodies from 31 providers"/>
</dbReference>
<dbReference type="DNASU" id="8493"/>
<dbReference type="Ensembl" id="ENST00000305921.8">
    <molecule id="O15297-1"/>
    <property type="protein sequence ID" value="ENSP00000306682.2"/>
    <property type="gene ID" value="ENSG00000170836.13"/>
</dbReference>
<dbReference type="Ensembl" id="ENST00000392995.7">
    <molecule id="O15297-2"/>
    <property type="protein sequence ID" value="ENSP00000376720.3"/>
    <property type="gene ID" value="ENSG00000170836.13"/>
</dbReference>
<dbReference type="GeneID" id="8493"/>
<dbReference type="KEGG" id="hsa:8493"/>
<dbReference type="MANE-Select" id="ENST00000305921.8">
    <property type="protein sequence ID" value="ENSP00000306682.2"/>
    <property type="RefSeq nucleotide sequence ID" value="NM_003620.4"/>
    <property type="RefSeq protein sequence ID" value="NP_003611.1"/>
</dbReference>
<dbReference type="UCSC" id="uc002iyt.3">
    <molecule id="O15297-1"/>
    <property type="organism name" value="human"/>
</dbReference>
<dbReference type="AGR" id="HGNC:9277"/>
<dbReference type="CTD" id="8493"/>
<dbReference type="DisGeNET" id="8493"/>
<dbReference type="GeneCards" id="PPM1D"/>
<dbReference type="HGNC" id="HGNC:9277">
    <property type="gene designation" value="PPM1D"/>
</dbReference>
<dbReference type="HPA" id="ENSG00000170836">
    <property type="expression patterns" value="Low tissue specificity"/>
</dbReference>
<dbReference type="MalaCards" id="PPM1D"/>
<dbReference type="MIM" id="114480">
    <property type="type" value="phenotype"/>
</dbReference>
<dbReference type="MIM" id="167000">
    <property type="type" value="phenotype"/>
</dbReference>
<dbReference type="MIM" id="605100">
    <property type="type" value="gene"/>
</dbReference>
<dbReference type="MIM" id="617450">
    <property type="type" value="phenotype"/>
</dbReference>
<dbReference type="neXtProt" id="NX_O15297"/>
<dbReference type="OpenTargets" id="ENSG00000170836"/>
<dbReference type="Orphanet" id="653767">
    <property type="disease" value="Jansen-de Vries syndrome"/>
</dbReference>
<dbReference type="PharmGKB" id="PA33605"/>
<dbReference type="VEuPathDB" id="HostDB:ENSG00000170836"/>
<dbReference type="eggNOG" id="KOG0698">
    <property type="taxonomic scope" value="Eukaryota"/>
</dbReference>
<dbReference type="GeneTree" id="ENSGT00940000155672"/>
<dbReference type="InParanoid" id="O15297"/>
<dbReference type="OMA" id="NTIMDQK"/>
<dbReference type="OrthoDB" id="10025511at2759"/>
<dbReference type="PAN-GO" id="O15297">
    <property type="GO annotations" value="6 GO annotations based on evolutionary models"/>
</dbReference>
<dbReference type="PhylomeDB" id="O15297"/>
<dbReference type="TreeFam" id="TF313481"/>
<dbReference type="PathwayCommons" id="O15297"/>
<dbReference type="Reactome" id="R-HSA-8878166">
    <property type="pathway name" value="Transcriptional regulation by RUNX2"/>
</dbReference>
<dbReference type="SignaLink" id="O15297"/>
<dbReference type="SIGNOR" id="O15297"/>
<dbReference type="BioGRID-ORCS" id="8493">
    <property type="hits" value="107 hits in 1180 CRISPR screens"/>
</dbReference>
<dbReference type="ChiTaRS" id="PPM1D">
    <property type="organism name" value="human"/>
</dbReference>
<dbReference type="GeneWiki" id="PPM1D"/>
<dbReference type="GenomeRNAi" id="8493"/>
<dbReference type="Pharos" id="O15297">
    <property type="development level" value="Tchem"/>
</dbReference>
<dbReference type="PRO" id="PR:O15297"/>
<dbReference type="Proteomes" id="UP000005640">
    <property type="component" value="Chromosome 17"/>
</dbReference>
<dbReference type="RNAct" id="O15297">
    <property type="molecule type" value="protein"/>
</dbReference>
<dbReference type="Bgee" id="ENSG00000170836">
    <property type="expression patterns" value="Expressed in secondary oocyte and 186 other cell types or tissues"/>
</dbReference>
<dbReference type="ExpressionAtlas" id="O15297">
    <property type="expression patterns" value="baseline and differential"/>
</dbReference>
<dbReference type="GO" id="GO:0005829">
    <property type="term" value="C:cytosol"/>
    <property type="evidence" value="ECO:0000314"/>
    <property type="project" value="UniProtKB"/>
</dbReference>
<dbReference type="GO" id="GO:0005730">
    <property type="term" value="C:nucleolus"/>
    <property type="evidence" value="ECO:0000314"/>
    <property type="project" value="HPA"/>
</dbReference>
<dbReference type="GO" id="GO:0005654">
    <property type="term" value="C:nucleoplasm"/>
    <property type="evidence" value="ECO:0000314"/>
    <property type="project" value="HPA"/>
</dbReference>
<dbReference type="GO" id="GO:0005634">
    <property type="term" value="C:nucleus"/>
    <property type="evidence" value="ECO:0000314"/>
    <property type="project" value="UniProtKB"/>
</dbReference>
<dbReference type="GO" id="GO:0046872">
    <property type="term" value="F:metal ion binding"/>
    <property type="evidence" value="ECO:0007669"/>
    <property type="project" value="UniProtKB-KW"/>
</dbReference>
<dbReference type="GO" id="GO:0051019">
    <property type="term" value="F:mitogen-activated protein kinase binding"/>
    <property type="evidence" value="ECO:0000353"/>
    <property type="project" value="UniProtKB"/>
</dbReference>
<dbReference type="GO" id="GO:0004674">
    <property type="term" value="F:protein serine/threonine kinase activity"/>
    <property type="evidence" value="ECO:0000304"/>
    <property type="project" value="Reactome"/>
</dbReference>
<dbReference type="GO" id="GO:0004722">
    <property type="term" value="F:protein serine/threonine phosphatase activity"/>
    <property type="evidence" value="ECO:0000314"/>
    <property type="project" value="UniProtKB"/>
</dbReference>
<dbReference type="GO" id="GO:0009267">
    <property type="term" value="P:cellular response to starvation"/>
    <property type="evidence" value="ECO:0007669"/>
    <property type="project" value="Ensembl"/>
</dbReference>
<dbReference type="GO" id="GO:0030330">
    <property type="term" value="P:DNA damage response, signal transduction by p53 class mediator"/>
    <property type="evidence" value="ECO:0007669"/>
    <property type="project" value="Ensembl"/>
</dbReference>
<dbReference type="GO" id="GO:0006346">
    <property type="term" value="P:DNA methylation-dependent constitutive heterochromatin formation"/>
    <property type="evidence" value="ECO:0000250"/>
    <property type="project" value="UniProtKB"/>
</dbReference>
<dbReference type="GO" id="GO:0000086">
    <property type="term" value="P:G2/M transition of mitotic cell cycle"/>
    <property type="evidence" value="ECO:0007669"/>
    <property type="project" value="Ensembl"/>
</dbReference>
<dbReference type="GO" id="GO:0008285">
    <property type="term" value="P:negative regulation of cell population proliferation"/>
    <property type="evidence" value="ECO:0000304"/>
    <property type="project" value="ProtInc"/>
</dbReference>
<dbReference type="GO" id="GO:0045814">
    <property type="term" value="P:negative regulation of gene expression, epigenetic"/>
    <property type="evidence" value="ECO:0000315"/>
    <property type="project" value="UniProtKB"/>
</dbReference>
<dbReference type="GO" id="GO:0035970">
    <property type="term" value="P:peptidyl-threonine dephosphorylation"/>
    <property type="evidence" value="ECO:0000314"/>
    <property type="project" value="UniProtKB"/>
</dbReference>
<dbReference type="GO" id="GO:0006470">
    <property type="term" value="P:protein dephosphorylation"/>
    <property type="evidence" value="ECO:0000304"/>
    <property type="project" value="ProtInc"/>
</dbReference>
<dbReference type="GO" id="GO:1902531">
    <property type="term" value="P:regulation of intracellular signal transduction"/>
    <property type="evidence" value="ECO:0000318"/>
    <property type="project" value="GO_Central"/>
</dbReference>
<dbReference type="GO" id="GO:0060260">
    <property type="term" value="P:regulation of transcription initiation by RNA polymerase II"/>
    <property type="evidence" value="ECO:0000304"/>
    <property type="project" value="Reactome"/>
</dbReference>
<dbReference type="GO" id="GO:0009617">
    <property type="term" value="P:response to bacterium"/>
    <property type="evidence" value="ECO:0007669"/>
    <property type="project" value="Ensembl"/>
</dbReference>
<dbReference type="GO" id="GO:0009314">
    <property type="term" value="P:response to radiation"/>
    <property type="evidence" value="ECO:0000304"/>
    <property type="project" value="ProtInc"/>
</dbReference>
<dbReference type="CDD" id="cd00143">
    <property type="entry name" value="PP2Cc"/>
    <property type="match status" value="1"/>
</dbReference>
<dbReference type="Gene3D" id="3.60.40.10">
    <property type="entry name" value="PPM-type phosphatase domain"/>
    <property type="match status" value="1"/>
</dbReference>
<dbReference type="InterPro" id="IPR015655">
    <property type="entry name" value="PP2C"/>
</dbReference>
<dbReference type="InterPro" id="IPR000222">
    <property type="entry name" value="PP2C_BS"/>
</dbReference>
<dbReference type="InterPro" id="IPR036457">
    <property type="entry name" value="PPM-type-like_dom_sf"/>
</dbReference>
<dbReference type="InterPro" id="IPR001932">
    <property type="entry name" value="PPM-type_phosphatase-like_dom"/>
</dbReference>
<dbReference type="PANTHER" id="PTHR47992">
    <property type="entry name" value="PROTEIN PHOSPHATASE"/>
    <property type="match status" value="1"/>
</dbReference>
<dbReference type="Pfam" id="PF00481">
    <property type="entry name" value="PP2C"/>
    <property type="match status" value="1"/>
</dbReference>
<dbReference type="SMART" id="SM00332">
    <property type="entry name" value="PP2Cc"/>
    <property type="match status" value="1"/>
</dbReference>
<dbReference type="SUPFAM" id="SSF81606">
    <property type="entry name" value="PP2C-like"/>
    <property type="match status" value="1"/>
</dbReference>
<dbReference type="PROSITE" id="PS01032">
    <property type="entry name" value="PPM_1"/>
    <property type="match status" value="1"/>
</dbReference>
<dbReference type="PROSITE" id="PS51746">
    <property type="entry name" value="PPM_2"/>
    <property type="match status" value="1"/>
</dbReference>
<organism>
    <name type="scientific">Homo sapiens</name>
    <name type="common">Human</name>
    <dbReference type="NCBI Taxonomy" id="9606"/>
    <lineage>
        <taxon>Eukaryota</taxon>
        <taxon>Metazoa</taxon>
        <taxon>Chordata</taxon>
        <taxon>Craniata</taxon>
        <taxon>Vertebrata</taxon>
        <taxon>Euteleostomi</taxon>
        <taxon>Mammalia</taxon>
        <taxon>Eutheria</taxon>
        <taxon>Euarchontoglires</taxon>
        <taxon>Primates</taxon>
        <taxon>Haplorrhini</taxon>
        <taxon>Catarrhini</taxon>
        <taxon>Hominidae</taxon>
        <taxon>Homo</taxon>
    </lineage>
</organism>
<gene>
    <name type="primary">PPM1D</name>
    <name type="synonym">WIP1</name>
</gene>
<reference key="1">
    <citation type="journal article" date="1997" name="Proc. Natl. Acad. Sci. U.S.A.">
        <title>Wip1, a novel human protein phosphatase that is induced in response to ionizing radiation in a p53-dependent manner.</title>
        <authorList>
            <person name="Fiscella M."/>
            <person name="Zhang H."/>
            <person name="Fan S."/>
            <person name="Sakaguchi K."/>
            <person name="Shen S."/>
            <person name="Mercer W.E."/>
            <person name="Vande Woude G.F."/>
            <person name="O'Connor P.M."/>
            <person name="Appella E."/>
        </authorList>
    </citation>
    <scope>NUCLEOTIDE SEQUENCE [MRNA] (ISOFORM 1)</scope>
    <scope>INDUCTION</scope>
    <scope>SUBCELLULAR LOCATION</scope>
</reference>
<reference key="2">
    <citation type="submission" date="2003-08" db="EMBL/GenBank/DDBJ databases">
        <title>Cloning of human full-length CDSs in BD Creator(TM) system donor vector.</title>
        <authorList>
            <person name="Kalnine N."/>
            <person name="Chen X."/>
            <person name="Rolfs A."/>
            <person name="Halleck A."/>
            <person name="Hines L."/>
            <person name="Eisenstein S."/>
            <person name="Koundinya M."/>
            <person name="Raphael J."/>
            <person name="Moreira D."/>
            <person name="Kelley T."/>
            <person name="LaBaer J."/>
            <person name="Lin Y."/>
            <person name="Phelan M."/>
            <person name="Farmer A."/>
        </authorList>
    </citation>
    <scope>NUCLEOTIDE SEQUENCE [LARGE SCALE MRNA] (ISOFORM 1)</scope>
</reference>
<reference key="3">
    <citation type="journal article" date="2006" name="Nature">
        <title>DNA sequence of human chromosome 17 and analysis of rearrangement in the human lineage.</title>
        <authorList>
            <person name="Zody M.C."/>
            <person name="Garber M."/>
            <person name="Adams D.J."/>
            <person name="Sharpe T."/>
            <person name="Harrow J."/>
            <person name="Lupski J.R."/>
            <person name="Nicholson C."/>
            <person name="Searle S.M."/>
            <person name="Wilming L."/>
            <person name="Young S.K."/>
            <person name="Abouelleil A."/>
            <person name="Allen N.R."/>
            <person name="Bi W."/>
            <person name="Bloom T."/>
            <person name="Borowsky M.L."/>
            <person name="Bugalter B.E."/>
            <person name="Butler J."/>
            <person name="Chang J.L."/>
            <person name="Chen C.-K."/>
            <person name="Cook A."/>
            <person name="Corum B."/>
            <person name="Cuomo C.A."/>
            <person name="de Jong P.J."/>
            <person name="DeCaprio D."/>
            <person name="Dewar K."/>
            <person name="FitzGerald M."/>
            <person name="Gilbert J."/>
            <person name="Gibson R."/>
            <person name="Gnerre S."/>
            <person name="Goldstein S."/>
            <person name="Grafham D.V."/>
            <person name="Grocock R."/>
            <person name="Hafez N."/>
            <person name="Hagopian D.S."/>
            <person name="Hart E."/>
            <person name="Norman C.H."/>
            <person name="Humphray S."/>
            <person name="Jaffe D.B."/>
            <person name="Jones M."/>
            <person name="Kamal M."/>
            <person name="Khodiyar V.K."/>
            <person name="LaButti K."/>
            <person name="Laird G."/>
            <person name="Lehoczky J."/>
            <person name="Liu X."/>
            <person name="Lokyitsang T."/>
            <person name="Loveland J."/>
            <person name="Lui A."/>
            <person name="Macdonald P."/>
            <person name="Major J.E."/>
            <person name="Matthews L."/>
            <person name="Mauceli E."/>
            <person name="McCarroll S.A."/>
            <person name="Mihalev A.H."/>
            <person name="Mudge J."/>
            <person name="Nguyen C."/>
            <person name="Nicol R."/>
            <person name="O'Leary S.B."/>
            <person name="Osoegawa K."/>
            <person name="Schwartz D.C."/>
            <person name="Shaw-Smith C."/>
            <person name="Stankiewicz P."/>
            <person name="Steward C."/>
            <person name="Swarbreck D."/>
            <person name="Venkataraman V."/>
            <person name="Whittaker C.A."/>
            <person name="Yang X."/>
            <person name="Zimmer A.R."/>
            <person name="Bradley A."/>
            <person name="Hubbard T."/>
            <person name="Birren B.W."/>
            <person name="Rogers J."/>
            <person name="Lander E.S."/>
            <person name="Nusbaum C."/>
        </authorList>
    </citation>
    <scope>NUCLEOTIDE SEQUENCE [LARGE SCALE GENOMIC DNA]</scope>
</reference>
<reference key="4">
    <citation type="submission" date="2005-07" db="EMBL/GenBank/DDBJ databases">
        <authorList>
            <person name="Mural R.J."/>
            <person name="Istrail S."/>
            <person name="Sutton G.G."/>
            <person name="Florea L."/>
            <person name="Halpern A.L."/>
            <person name="Mobarry C.M."/>
            <person name="Lippert R."/>
            <person name="Walenz B."/>
            <person name="Shatkay H."/>
            <person name="Dew I."/>
            <person name="Miller J.R."/>
            <person name="Flanigan M.J."/>
            <person name="Edwards N.J."/>
            <person name="Bolanos R."/>
            <person name="Fasulo D."/>
            <person name="Halldorsson B.V."/>
            <person name="Hannenhalli S."/>
            <person name="Turner R."/>
            <person name="Yooseph S."/>
            <person name="Lu F."/>
            <person name="Nusskern D.R."/>
            <person name="Shue B.C."/>
            <person name="Zheng X.H."/>
            <person name="Zhong F."/>
            <person name="Delcher A.L."/>
            <person name="Huson D.H."/>
            <person name="Kravitz S.A."/>
            <person name="Mouchard L."/>
            <person name="Reinert K."/>
            <person name="Remington K.A."/>
            <person name="Clark A.G."/>
            <person name="Waterman M.S."/>
            <person name="Eichler E.E."/>
            <person name="Adams M.D."/>
            <person name="Hunkapiller M.W."/>
            <person name="Myers E.W."/>
            <person name="Venter J.C."/>
        </authorList>
    </citation>
    <scope>NUCLEOTIDE SEQUENCE [LARGE SCALE GENOMIC DNA]</scope>
</reference>
<reference key="5">
    <citation type="journal article" date="2004" name="Genome Res.">
        <title>The status, quality, and expansion of the NIH full-length cDNA project: the Mammalian Gene Collection (MGC).</title>
        <authorList>
            <consortium name="The MGC Project Team"/>
        </authorList>
    </citation>
    <scope>NUCLEOTIDE SEQUENCE [LARGE SCALE MRNA] (ISOFORMS 1 AND 2)</scope>
    <scope>VARIANT GLN-322</scope>
    <source>
        <tissue>Brain</tissue>
        <tissue>Skin</tissue>
    </source>
</reference>
<reference key="6">
    <citation type="journal article" date="2005" name="Genes Dev.">
        <title>PPM1D dephosphorylates Chk1 and p53 and abrogates cell cycle checkpoints.</title>
        <authorList>
            <person name="Lu X."/>
            <person name="Nannenga B."/>
            <person name="Donehower L.A."/>
        </authorList>
    </citation>
    <scope>FUNCTION</scope>
    <scope>INTERACTION WITH CHEK1</scope>
    <scope>INDUCTION</scope>
    <scope>MUTAGENESIS OF ASP-314</scope>
</reference>
<reference key="7">
    <citation type="journal article" date="2006" name="Cell Death Differ.">
        <title>Regulation of the antioncogenic Chk2 kinase by the oncogenic Wip1 phosphatase.</title>
        <authorList>
            <person name="Fujimoto H."/>
            <person name="Onishi N."/>
            <person name="Kato N."/>
            <person name="Takekawa M."/>
            <person name="Xu X.Z."/>
            <person name="Kosugi A."/>
            <person name="Kondo T."/>
            <person name="Imamura M."/>
            <person name="Oishi I."/>
            <person name="Yoda A."/>
            <person name="Minami Y."/>
        </authorList>
    </citation>
    <scope>FUNCTION IN APOPTOSIS</scope>
    <scope>FUNCTION IN DEPHOSPHORYLATION OF CHEK2</scope>
    <scope>INTERACTION WITH CHEK2</scope>
</reference>
<reference key="8">
    <citation type="journal article" date="2009" name="Sci. Signal.">
        <title>Quantitative phosphoproteomic analysis of T cell receptor signaling reveals system-wide modulation of protein-protein interactions.</title>
        <authorList>
            <person name="Mayya V."/>
            <person name="Lundgren D.H."/>
            <person name="Hwang S.-I."/>
            <person name="Rezaul K."/>
            <person name="Wu L."/>
            <person name="Eng J.K."/>
            <person name="Rodionov V."/>
            <person name="Han D.K."/>
        </authorList>
    </citation>
    <scope>PHOSPHORYLATION [LARGE SCALE ANALYSIS] AT SER-40</scope>
    <scope>IDENTIFICATION BY MASS SPECTROMETRY [LARGE SCALE ANALYSIS]</scope>
    <source>
        <tissue>Leukemic T-cell</tissue>
    </source>
</reference>
<reference key="9">
    <citation type="journal article" date="2011" name="PLoS ONE">
        <title>LZAP inhibits p38 MAPK (p38) phosphorylation and activity by facilitating p38 association with the wild-type p53 induced phosphatase 1 (WIP1).</title>
        <authorList>
            <person name="An H."/>
            <person name="Lu X."/>
            <person name="Liu D."/>
            <person name="Yarbrough W.G."/>
        </authorList>
    </citation>
    <scope>FUNCTION</scope>
    <scope>INTERACTION WITH MAPK14</scope>
</reference>
<reference key="10">
    <citation type="journal article" date="2013" name="J. Proteome Res.">
        <title>Toward a comprehensive characterization of a human cancer cell phosphoproteome.</title>
        <authorList>
            <person name="Zhou H."/>
            <person name="Di Palma S."/>
            <person name="Preisinger C."/>
            <person name="Peng M."/>
            <person name="Polat A.N."/>
            <person name="Heck A.J."/>
            <person name="Mohammed S."/>
        </authorList>
    </citation>
    <scope>PHOSPHORYLATION [LARGE SCALE ANALYSIS] AT SER-85</scope>
    <scope>IDENTIFICATION BY MASS SPECTROMETRY [LARGE SCALE ANALYSIS]</scope>
    <source>
        <tissue>Erythroleukemia</tissue>
    </source>
</reference>
<reference key="11">
    <citation type="journal article" date="2013" name="Nature">
        <title>Mosaic PPM1D mutations are associated with predisposition to breast and ovarian cancer.</title>
        <authorList>
            <consortium name="Breast and Ovarian Cancer Susceptibility Collaboration"/>
            <consortium name="Wellcome Trust Case Control Consortium"/>
            <person name="Ruark E."/>
            <person name="Snape K."/>
            <person name="Humburg P."/>
            <person name="Loveday C."/>
            <person name="Bajrami I."/>
            <person name="Brough R."/>
            <person name="Rodrigues D.N."/>
            <person name="Renwick A."/>
            <person name="Seal S."/>
            <person name="Ramsay E."/>
            <person name="Del Vechio Duarte S."/>
            <person name="Rivas M.A."/>
            <person name="Warren-Perry M."/>
            <person name="Zachariou A."/>
            <person name="Campion-Flora A."/>
            <person name="Hanks S."/>
            <person name="Murray A."/>
            <person name="Ansari Pour N."/>
            <person name="Douglas J."/>
            <person name="Gregory L."/>
            <person name="Rimmer A."/>
            <person name="Walker N.M."/>
            <person name="Yang T.P."/>
            <person name="Adlard J.W."/>
            <person name="Barwell J."/>
            <person name="Berg J."/>
            <person name="Brady A.F."/>
            <person name="Brewer C."/>
            <person name="Brice G."/>
            <person name="Chapman C."/>
            <person name="Cook J."/>
            <person name="Davidson R."/>
            <person name="Donaldson A."/>
            <person name="Douglas F."/>
            <person name="Eccles D."/>
            <person name="Evans D.G."/>
            <person name="Greenhalgh L."/>
            <person name="Henderson A."/>
            <person name="Izatt L."/>
            <person name="Kumar A."/>
            <person name="Lalloo F."/>
            <person name="Miedzybrodzka Z."/>
            <person name="Morrison P.J."/>
            <person name="Paterson J."/>
            <person name="Porteous M."/>
            <person name="Rogers M.T."/>
            <person name="Shanley S."/>
            <person name="Walker L."/>
            <person name="Gore M."/>
            <person name="Houlston R."/>
            <person name="Brown M.A."/>
            <person name="Caufield M.J."/>
            <person name="Deloukas P."/>
            <person name="McCarthy M.I."/>
            <person name="Todd J.A."/>
            <person name="Turnbull C."/>
            <person name="Reis-Filho J.S."/>
            <person name="Ashworth A."/>
            <person name="Antoniou A.C."/>
            <person name="Lord C.J."/>
            <person name="Donnelly P."/>
            <person name="Rahman N."/>
        </authorList>
    </citation>
    <scope>FUNCTION</scope>
    <scope>INVOLVEMENT IN BC</scope>
    <scope>INVOLVEMENT IN OC</scope>
    <scope>VARIANT OC 446-SER--CYS-605 DEL</scope>
    <scope>VARIANTS BC 462-GLN--CYS-605 DEL; 478-CYS--CYS-605 DEL; 484-LEU--CYS-605 DEL AND 538-LEU--CYS-605 DEL</scope>
    <scope>CHARACTERIZATION OF VARIANT BC 462-GLN--CYS-605 DEL</scope>
</reference>
<reference key="12">
    <citation type="journal article" date="2017" name="Am. J. Hum. Genet.">
        <title>De novo truncating mutations in the last and penultimate exons of PPM1D cause an intellectual disability syndrome.</title>
        <authorList>
            <consortium name="Deciphering Developmental Disorders Study"/>
            <person name="Jansen S."/>
            <person name="Geuer S."/>
            <person name="Pfundt R."/>
            <person name="Brough R."/>
            <person name="Ghongane P."/>
            <person name="Herkert J.C."/>
            <person name="Marco E.J."/>
            <person name="Willemsen M.H."/>
            <person name="Kleefstra T."/>
            <person name="Hannibal M."/>
            <person name="Shieh J.T."/>
            <person name="Lynch S.A."/>
            <person name="Flinter F."/>
            <person name="FitzPatrick D.R."/>
            <person name="Gardham A."/>
            <person name="Bernhard B."/>
            <person name="Ragge N."/>
            <person name="Newbury-Ecob R."/>
            <person name="Bernier R."/>
            <person name="Kvarnung M."/>
            <person name="Magnusson E.A."/>
            <person name="Wessels M.W."/>
            <person name="van Slegtenhorst M.A."/>
            <person name="Monaghan K.G."/>
            <person name="de Vries P."/>
            <person name="Veltman J.A."/>
            <person name="Lord C.J."/>
            <person name="Vissers L.E."/>
            <person name="de Vries B.B."/>
        </authorList>
    </citation>
    <scope>SUBCELLULAR LOCATION</scope>
    <scope>TISSUE SPECIFICITY</scope>
    <scope>INVOLVEMENT IN JDVS</scope>
    <scope>VARIANTS JDVS 404-GLN--CYS-605 DEL; 407-CYS--CYS-605 DEL; 427-TRP--CYS-605 DEL; 447-GLU--CYS-605 DEL AND 552-ARG--CYS-605 DEL</scope>
</reference>
<name>PPM1D_HUMAN</name>
<feature type="chain" id="PRO_0000057752" description="Protein phosphatase 1D">
    <location>
        <begin position="1"/>
        <end position="605"/>
    </location>
</feature>
<feature type="domain" description="PPM-type phosphatase" evidence="3">
    <location>
        <begin position="8"/>
        <end position="375"/>
    </location>
</feature>
<feature type="region of interest" description="Interaction with CHEK1" evidence="6">
    <location>
        <begin position="1"/>
        <end position="101"/>
    </location>
</feature>
<feature type="region of interest" description="Disordered" evidence="4">
    <location>
        <begin position="28"/>
        <end position="90"/>
    </location>
</feature>
<feature type="region of interest" description="Disordered" evidence="4">
    <location>
        <begin position="516"/>
        <end position="591"/>
    </location>
</feature>
<feature type="compositionally biased region" description="Polar residues" evidence="4">
    <location>
        <begin position="530"/>
        <end position="544"/>
    </location>
</feature>
<feature type="compositionally biased region" description="Polar residues" evidence="4">
    <location>
        <begin position="555"/>
        <end position="577"/>
    </location>
</feature>
<feature type="compositionally biased region" description="Basic residues" evidence="4">
    <location>
        <begin position="579"/>
        <end position="588"/>
    </location>
</feature>
<feature type="binding site" evidence="1">
    <location>
        <position position="105"/>
    </location>
    <ligand>
        <name>Mn(2+)</name>
        <dbReference type="ChEBI" id="CHEBI:29035"/>
        <label>1</label>
    </ligand>
</feature>
<feature type="binding site" evidence="1">
    <location>
        <position position="105"/>
    </location>
    <ligand>
        <name>Mn(2+)</name>
        <dbReference type="ChEBI" id="CHEBI:29035"/>
        <label>2</label>
    </ligand>
</feature>
<feature type="binding site" evidence="1">
    <location>
        <position position="106"/>
    </location>
    <ligand>
        <name>Mn(2+)</name>
        <dbReference type="ChEBI" id="CHEBI:29035"/>
        <label>1</label>
    </ligand>
</feature>
<feature type="binding site" evidence="1">
    <location>
        <position position="314"/>
    </location>
    <ligand>
        <name>Mn(2+)</name>
        <dbReference type="ChEBI" id="CHEBI:29035"/>
        <label>2</label>
    </ligand>
</feature>
<feature type="binding site" evidence="1">
    <location>
        <position position="366"/>
    </location>
    <ligand>
        <name>Mn(2+)</name>
        <dbReference type="ChEBI" id="CHEBI:29035"/>
        <label>2</label>
    </ligand>
</feature>
<feature type="modified residue" description="Phosphoserine" evidence="13">
    <location>
        <position position="40"/>
    </location>
</feature>
<feature type="modified residue" description="Phosphoserine" evidence="14">
    <location>
        <position position="85"/>
    </location>
</feature>
<feature type="splice variant" id="VSP_056377" description="In isoform 2." evidence="12">
    <original>SLEEDPWPRV</original>
    <variation>DFGFELDSRK</variation>
    <location>
        <begin position="421"/>
        <end position="430"/>
    </location>
</feature>
<feature type="splice variant" id="VSP_056378" description="In isoform 2." evidence="12">
    <location>
        <begin position="431"/>
        <end position="605"/>
    </location>
</feature>
<feature type="sequence variant" id="VAR_070430" description="In dbSNP:rs17855093." evidence="5">
    <original>P</original>
    <variation>Q</variation>
    <location>
        <position position="322"/>
    </location>
</feature>
<feature type="sequence variant" id="VAR_080081" description="In JDVS." evidence="10">
    <location>
        <begin position="404"/>
        <end position="605"/>
    </location>
</feature>
<feature type="sequence variant" id="VAR_080082" description="In JDVS." evidence="10">
    <location>
        <begin position="407"/>
        <end position="605"/>
    </location>
</feature>
<feature type="sequence variant" id="VAR_080083" description="In JDVS." evidence="10">
    <location>
        <begin position="427"/>
        <end position="605"/>
    </location>
</feature>
<feature type="sequence variant" id="VAR_080084" description="In OC; may be associated with disease susceptibility." evidence="9">
    <location>
        <begin position="446"/>
        <end position="605"/>
    </location>
</feature>
<feature type="sequence variant" id="VAR_080085" description="In JDVS." evidence="10">
    <location>
        <begin position="447"/>
        <end position="605"/>
    </location>
</feature>
<feature type="sequence variant" id="VAR_080086" description="In BC; may be associated with disease susceptibility; gain-of-function mutation that results in increased negative regulation of p53 expression in response to ionizing radiation exposure." evidence="9">
    <location>
        <begin position="462"/>
        <end position="605"/>
    </location>
</feature>
<feature type="sequence variant" id="VAR_080087" description="In BC; may be associated with disease susceptibility." evidence="9">
    <location>
        <begin position="478"/>
        <end position="605"/>
    </location>
</feature>
<feature type="sequence variant" id="VAR_080088" description="In BC; may be associated with disease susceptibility." evidence="9">
    <location>
        <begin position="484"/>
        <end position="605"/>
    </location>
</feature>
<feature type="sequence variant" id="VAR_080089" description="In BC; may be associated with disease susceptibility." evidence="9">
    <location>
        <begin position="538"/>
        <end position="605"/>
    </location>
</feature>
<feature type="sequence variant" id="VAR_080090" description="In JDVS." evidence="10">
    <location>
        <begin position="552"/>
        <end position="605"/>
    </location>
</feature>
<feature type="mutagenesis site" description="Abrogates phosphatase activity." evidence="6">
    <original>D</original>
    <variation>A</variation>
    <location>
        <position position="314"/>
    </location>
</feature>
<feature type="strand" evidence="15">
    <location>
        <begin position="6"/>
        <end position="14"/>
    </location>
</feature>
<feature type="strand" evidence="15">
    <location>
        <begin position="23"/>
        <end position="32"/>
    </location>
</feature>
<feature type="turn" evidence="15">
    <location>
        <begin position="33"/>
        <end position="36"/>
    </location>
</feature>
<feature type="strand" evidence="15">
    <location>
        <begin position="96"/>
        <end position="110"/>
    </location>
</feature>
<feature type="helix" evidence="15">
    <location>
        <begin position="111"/>
        <end position="125"/>
    </location>
</feature>
<feature type="turn" evidence="15">
    <location>
        <begin position="128"/>
        <end position="131"/>
    </location>
</feature>
<feature type="helix" evidence="15">
    <location>
        <begin position="135"/>
        <end position="156"/>
    </location>
</feature>
<feature type="turn" evidence="15">
    <location>
        <begin position="157"/>
        <end position="159"/>
    </location>
</feature>
<feature type="strand" evidence="15">
    <location>
        <begin position="175"/>
        <end position="181"/>
    </location>
</feature>
<feature type="strand" evidence="15">
    <location>
        <begin position="184"/>
        <end position="192"/>
    </location>
</feature>
<feature type="strand" evidence="15">
    <location>
        <begin position="195"/>
        <end position="199"/>
    </location>
</feature>
<feature type="strand" evidence="15">
    <location>
        <begin position="209"/>
        <end position="212"/>
    </location>
</feature>
<feature type="helix" evidence="15">
    <location>
        <begin position="222"/>
        <end position="230"/>
    </location>
</feature>
<feature type="strand" evidence="15">
    <location>
        <begin position="234"/>
        <end position="238"/>
    </location>
</feature>
<feature type="strand" evidence="15">
    <location>
        <begin position="241"/>
        <end position="245"/>
    </location>
</feature>
<feature type="helix" evidence="15">
    <location>
        <begin position="259"/>
        <end position="264"/>
    </location>
</feature>
<feature type="helix" evidence="15">
    <location>
        <begin position="278"/>
        <end position="280"/>
    </location>
</feature>
<feature type="turn" evidence="15">
    <location>
        <begin position="283"/>
        <end position="285"/>
    </location>
</feature>
<feature type="strand" evidence="15">
    <location>
        <begin position="288"/>
        <end position="291"/>
    </location>
</feature>
<feature type="strand" evidence="15">
    <location>
        <begin position="295"/>
        <end position="300"/>
    </location>
</feature>
<feature type="turn" evidence="15">
    <location>
        <begin position="303"/>
        <end position="305"/>
    </location>
</feature>
<feature type="strand" evidence="15">
    <location>
        <begin position="306"/>
        <end position="312"/>
    </location>
</feature>
<feature type="helix" evidence="15">
    <location>
        <begin position="314"/>
        <end position="317"/>
    </location>
</feature>
<feature type="helix" evidence="15">
    <location>
        <begin position="322"/>
        <end position="339"/>
    </location>
</feature>
<feature type="helix" evidence="15">
    <location>
        <begin position="340"/>
        <end position="342"/>
    </location>
</feature>
<feature type="helix" evidence="15">
    <location>
        <begin position="346"/>
        <end position="360"/>
    </location>
</feature>
<feature type="strand" evidence="15">
    <location>
        <begin position="368"/>
        <end position="377"/>
    </location>
</feature>
<feature type="strand" evidence="15">
    <location>
        <begin position="391"/>
        <end position="393"/>
    </location>
</feature>
<feature type="helix" evidence="15">
    <location>
        <begin position="395"/>
        <end position="397"/>
    </location>
</feature>
<comment type="function">
    <text evidence="2 6 7 8 9">Involved in the negative regulation of p53 expression (PubMed:23242139). Required for the relief of p53-dependent checkpoint mediated cell cycle arrest. Binds to and dephosphorylates 'Ser-15' of TP53 and 'Ser-345' of CHEK1 which contributes to the functional inactivation of these proteins (PubMed:15870257, PubMed:16311512). Mediates MAPK14 dephosphorylation and inactivation (PubMed:21283629). Is also an important regulator of global heterochromatin silencing and critical in maintaining genome integrity (By similarity).</text>
</comment>
<comment type="catalytic activity">
    <reaction>
        <text>O-phospho-L-seryl-[protein] + H2O = L-seryl-[protein] + phosphate</text>
        <dbReference type="Rhea" id="RHEA:20629"/>
        <dbReference type="Rhea" id="RHEA-COMP:9863"/>
        <dbReference type="Rhea" id="RHEA-COMP:11604"/>
        <dbReference type="ChEBI" id="CHEBI:15377"/>
        <dbReference type="ChEBI" id="CHEBI:29999"/>
        <dbReference type="ChEBI" id="CHEBI:43474"/>
        <dbReference type="ChEBI" id="CHEBI:83421"/>
        <dbReference type="EC" id="3.1.3.16"/>
    </reaction>
</comment>
<comment type="catalytic activity">
    <reaction>
        <text>O-phospho-L-threonyl-[protein] + H2O = L-threonyl-[protein] + phosphate</text>
        <dbReference type="Rhea" id="RHEA:47004"/>
        <dbReference type="Rhea" id="RHEA-COMP:11060"/>
        <dbReference type="Rhea" id="RHEA-COMP:11605"/>
        <dbReference type="ChEBI" id="CHEBI:15377"/>
        <dbReference type="ChEBI" id="CHEBI:30013"/>
        <dbReference type="ChEBI" id="CHEBI:43474"/>
        <dbReference type="ChEBI" id="CHEBI:61977"/>
        <dbReference type="EC" id="3.1.3.16"/>
    </reaction>
</comment>
<comment type="cofactor">
    <cofactor evidence="1">
        <name>Mg(2+)</name>
        <dbReference type="ChEBI" id="CHEBI:18420"/>
    </cofactor>
    <cofactor evidence="1">
        <name>Mn(2+)</name>
        <dbReference type="ChEBI" id="CHEBI:29035"/>
    </cofactor>
    <text evidence="1">Binds 2 magnesium or manganese ions per subunit.</text>
</comment>
<comment type="subunit">
    <text evidence="6 7 8">Interacts with CHEK1 and CHEK2; dephosphorylates them. Interacts with MAPK14 (PubMed:21283629).</text>
</comment>
<comment type="interaction">
    <interactant intactId="EBI-1551512">
        <id>O15297</id>
    </interactant>
    <interactant intactId="EBI-494830">
        <id>P16104</id>
        <label>H2AX</label>
    </interactant>
    <organismsDiffer>false</organismsDiffer>
    <experiments>3</experiments>
</comment>
<comment type="interaction">
    <interactant intactId="EBI-1551512">
        <id>O15297</id>
    </interactant>
    <interactant intactId="EBI-389668">
        <id>Q00987</id>
        <label>MDM2</label>
    </interactant>
    <organismsDiffer>false</organismsDiffer>
    <experiments>4</experiments>
</comment>
<comment type="interaction">
    <interactant intactId="EBI-1551512">
        <id>O15297</id>
    </interactant>
    <interactant intactId="EBI-976402">
        <id>Q13950</id>
        <label>RUNX2</label>
    </interactant>
    <organismsDiffer>false</organismsDiffer>
    <experiments>4</experiments>
</comment>
<comment type="subcellular location">
    <subcellularLocation>
        <location evidence="10 11">Nucleus</location>
    </subcellularLocation>
    <subcellularLocation>
        <location evidence="10">Cytoplasm</location>
        <location evidence="10">Cytosol</location>
    </subcellularLocation>
</comment>
<comment type="alternative products">
    <event type="alternative splicing"/>
    <isoform>
        <id>O15297-1</id>
        <name>1</name>
        <sequence type="displayed"/>
    </isoform>
    <isoform>
        <id>O15297-2</id>
        <name>2</name>
        <sequence type="described" ref="VSP_056377 VSP_056378"/>
    </isoform>
</comment>
<comment type="tissue specificity">
    <text evidence="10">Expressed in fetal and adult brain. Also detected in fetal liver and skeletal muscle, but not in their adult counterparts.</text>
</comment>
<comment type="induction">
    <text evidence="6 11">By p53/TP53.</text>
</comment>
<comment type="disease" evidence="10">
    <disease id="DI-04996">
        <name>Jansen-de Vries syndrome</name>
        <acronym>JDVS</acronym>
        <description>An autosomal dominant neurodevelopmental disorder characterized by mild to severe intellectual disability, psychomotor developmental delay, speech delay, and behavioral manifestations including attention deficit-hyperactivity disorder, autism and anxiety disorders. Most patients have variable additional features, including feeding and gastrointestinal difficulties, high pain threshold, hypersensitivity to sound, hypotonia, broad-based gait, and dysmorphic features, including mild facial abnormalities, strabismus, and small hands and feet.</description>
        <dbReference type="MIM" id="617450"/>
    </disease>
    <text>The disease is caused by variants affecting the gene represented in this entry.</text>
</comment>
<comment type="disease" evidence="9">
    <disease id="DI-02602">
        <name>Breast cancer</name>
        <acronym>BC</acronym>
        <description>A common malignancy originating from breast epithelial tissue. Breast neoplasms can be distinguished by their histologic pattern. Invasive ductal carcinoma is by far the most common type. Breast cancer is etiologically and genetically heterogeneous. Important genetic factors have been indicated by familial occurrence and bilateral involvement. Mutations at more than one locus can be involved in different families or even in the same case.</description>
        <dbReference type="MIM" id="114480"/>
    </disease>
    <text>Disease susceptibility may be associated with variants affecting the gene represented in this entry.</text>
</comment>
<comment type="disease" evidence="9">
    <disease id="DI-01655">
        <name>Ovarian cancer</name>
        <acronym>OC</acronym>
        <description>The term ovarian cancer defines malignancies originating from ovarian tissue. Although many histologic types of ovarian tumors have been described, epithelial ovarian carcinoma is the most common form. Ovarian cancers are often asymptomatic and the recognized signs and symptoms, even of late-stage disease, are vague. Consequently, most patients are diagnosed with advanced disease.</description>
        <dbReference type="MIM" id="167000"/>
    </disease>
    <text>Disease susceptibility may be associated with variants affecting the gene represented in this entry.</text>
</comment>
<comment type="similarity">
    <text>Belongs to the PP2C family.</text>
</comment>
<comment type="online information" name="Atlas of Genetics and Cytogenetics in Oncology and Haematology">
    <link uri="https://atlasgeneticsoncology.org/gene/41803/PPM1D"/>
</comment>
<proteinExistence type="evidence at protein level"/>